<gene>
    <name type="primary">not2</name>
    <name type="ORF">SPCC4G3.15c</name>
</gene>
<accession>P87240</accession>
<reference key="1">
    <citation type="journal article" date="2002" name="Nature">
        <title>The genome sequence of Schizosaccharomyces pombe.</title>
        <authorList>
            <person name="Wood V."/>
            <person name="Gwilliam R."/>
            <person name="Rajandream M.A."/>
            <person name="Lyne M.H."/>
            <person name="Lyne R."/>
            <person name="Stewart A."/>
            <person name="Sgouros J.G."/>
            <person name="Peat N."/>
            <person name="Hayles J."/>
            <person name="Baker S.G."/>
            <person name="Basham D."/>
            <person name="Bowman S."/>
            <person name="Brooks K."/>
            <person name="Brown D."/>
            <person name="Brown S."/>
            <person name="Chillingworth T."/>
            <person name="Churcher C.M."/>
            <person name="Collins M."/>
            <person name="Connor R."/>
            <person name="Cronin A."/>
            <person name="Davis P."/>
            <person name="Feltwell T."/>
            <person name="Fraser A."/>
            <person name="Gentles S."/>
            <person name="Goble A."/>
            <person name="Hamlin N."/>
            <person name="Harris D.E."/>
            <person name="Hidalgo J."/>
            <person name="Hodgson G."/>
            <person name="Holroyd S."/>
            <person name="Hornsby T."/>
            <person name="Howarth S."/>
            <person name="Huckle E.J."/>
            <person name="Hunt S."/>
            <person name="Jagels K."/>
            <person name="James K.D."/>
            <person name="Jones L."/>
            <person name="Jones M."/>
            <person name="Leather S."/>
            <person name="McDonald S."/>
            <person name="McLean J."/>
            <person name="Mooney P."/>
            <person name="Moule S."/>
            <person name="Mungall K.L."/>
            <person name="Murphy L.D."/>
            <person name="Niblett D."/>
            <person name="Odell C."/>
            <person name="Oliver K."/>
            <person name="O'Neil S."/>
            <person name="Pearson D."/>
            <person name="Quail M.A."/>
            <person name="Rabbinowitsch E."/>
            <person name="Rutherford K.M."/>
            <person name="Rutter S."/>
            <person name="Saunders D."/>
            <person name="Seeger K."/>
            <person name="Sharp S."/>
            <person name="Skelton J."/>
            <person name="Simmonds M.N."/>
            <person name="Squares R."/>
            <person name="Squares S."/>
            <person name="Stevens K."/>
            <person name="Taylor K."/>
            <person name="Taylor R.G."/>
            <person name="Tivey A."/>
            <person name="Walsh S.V."/>
            <person name="Warren T."/>
            <person name="Whitehead S."/>
            <person name="Woodward J.R."/>
            <person name="Volckaert G."/>
            <person name="Aert R."/>
            <person name="Robben J."/>
            <person name="Grymonprez B."/>
            <person name="Weltjens I."/>
            <person name="Vanstreels E."/>
            <person name="Rieger M."/>
            <person name="Schaefer M."/>
            <person name="Mueller-Auer S."/>
            <person name="Gabel C."/>
            <person name="Fuchs M."/>
            <person name="Duesterhoeft A."/>
            <person name="Fritzc C."/>
            <person name="Holzer E."/>
            <person name="Moestl D."/>
            <person name="Hilbert H."/>
            <person name="Borzym K."/>
            <person name="Langer I."/>
            <person name="Beck A."/>
            <person name="Lehrach H."/>
            <person name="Reinhardt R."/>
            <person name="Pohl T.M."/>
            <person name="Eger P."/>
            <person name="Zimmermann W."/>
            <person name="Wedler H."/>
            <person name="Wambutt R."/>
            <person name="Purnelle B."/>
            <person name="Goffeau A."/>
            <person name="Cadieu E."/>
            <person name="Dreano S."/>
            <person name="Gloux S."/>
            <person name="Lelaure V."/>
            <person name="Mottier S."/>
            <person name="Galibert F."/>
            <person name="Aves S.J."/>
            <person name="Xiang Z."/>
            <person name="Hunt C."/>
            <person name="Moore K."/>
            <person name="Hurst S.M."/>
            <person name="Lucas M."/>
            <person name="Rochet M."/>
            <person name="Gaillardin C."/>
            <person name="Tallada V.A."/>
            <person name="Garzon A."/>
            <person name="Thode G."/>
            <person name="Daga R.R."/>
            <person name="Cruzado L."/>
            <person name="Jimenez J."/>
            <person name="Sanchez M."/>
            <person name="del Rey F."/>
            <person name="Benito J."/>
            <person name="Dominguez A."/>
            <person name="Revuelta J.L."/>
            <person name="Moreno S."/>
            <person name="Armstrong J."/>
            <person name="Forsburg S.L."/>
            <person name="Cerutti L."/>
            <person name="Lowe T."/>
            <person name="McCombie W.R."/>
            <person name="Paulsen I."/>
            <person name="Potashkin J."/>
            <person name="Shpakovski G.V."/>
            <person name="Ussery D."/>
            <person name="Barrell B.G."/>
            <person name="Nurse P."/>
        </authorList>
    </citation>
    <scope>NUCLEOTIDE SEQUENCE [LARGE SCALE GENOMIC DNA]</scope>
    <source>
        <strain>972 / ATCC 24843</strain>
    </source>
</reference>
<reference key="2">
    <citation type="journal article" date="2011" name="Science">
        <title>Comparative functional genomics of the fission yeasts.</title>
        <authorList>
            <person name="Rhind N."/>
            <person name="Chen Z."/>
            <person name="Yassour M."/>
            <person name="Thompson D.A."/>
            <person name="Haas B.J."/>
            <person name="Habib N."/>
            <person name="Wapinski I."/>
            <person name="Roy S."/>
            <person name="Lin M.F."/>
            <person name="Heiman D.I."/>
            <person name="Young S.K."/>
            <person name="Furuya K."/>
            <person name="Guo Y."/>
            <person name="Pidoux A."/>
            <person name="Chen H.M."/>
            <person name="Robbertse B."/>
            <person name="Goldberg J.M."/>
            <person name="Aoki K."/>
            <person name="Bayne E.H."/>
            <person name="Berlin A.M."/>
            <person name="Desjardins C.A."/>
            <person name="Dobbs E."/>
            <person name="Dukaj L."/>
            <person name="Fan L."/>
            <person name="FitzGerald M.G."/>
            <person name="French C."/>
            <person name="Gujja S."/>
            <person name="Hansen K."/>
            <person name="Keifenheim D."/>
            <person name="Levin J.Z."/>
            <person name="Mosher R.A."/>
            <person name="Mueller C.A."/>
            <person name="Pfiffner J."/>
            <person name="Priest M."/>
            <person name="Russ C."/>
            <person name="Smialowska A."/>
            <person name="Swoboda P."/>
            <person name="Sykes S.M."/>
            <person name="Vaughn M."/>
            <person name="Vengrova S."/>
            <person name="Yoder R."/>
            <person name="Zeng Q."/>
            <person name="Allshire R."/>
            <person name="Baulcombe D."/>
            <person name="Birren B.W."/>
            <person name="Brown W."/>
            <person name="Ekwall K."/>
            <person name="Kellis M."/>
            <person name="Leatherwood J."/>
            <person name="Levin H."/>
            <person name="Margalit H."/>
            <person name="Martienssen R."/>
            <person name="Nieduszynski C.A."/>
            <person name="Spatafora J.W."/>
            <person name="Friedman N."/>
            <person name="Dalgaard J.Z."/>
            <person name="Baumann P."/>
            <person name="Niki H."/>
            <person name="Regev A."/>
            <person name="Nusbaum C."/>
        </authorList>
    </citation>
    <scope>REVISION OF GENE MODEL</scope>
</reference>
<reference key="3">
    <citation type="journal article" date="2006" name="Nat. Biotechnol.">
        <title>ORFeome cloning and global analysis of protein localization in the fission yeast Schizosaccharomyces pombe.</title>
        <authorList>
            <person name="Matsuyama A."/>
            <person name="Arai R."/>
            <person name="Yashiroda Y."/>
            <person name="Shirai A."/>
            <person name="Kamata A."/>
            <person name="Sekido S."/>
            <person name="Kobayashi Y."/>
            <person name="Hashimoto A."/>
            <person name="Hamamoto M."/>
            <person name="Hiraoka Y."/>
            <person name="Horinouchi S."/>
            <person name="Yoshida M."/>
        </authorList>
    </citation>
    <scope>SUBCELLULAR LOCATION [LARGE SCALE ANALYSIS]</scope>
</reference>
<reference key="4">
    <citation type="journal article" date="2011" name="Genetics">
        <title>Augmented annotation of the Schizosaccharomyces pombe genome reveals additional genes required for growth and viability.</title>
        <authorList>
            <person name="Bitton D.A."/>
            <person name="Wood V."/>
            <person name="Scutt P.J."/>
            <person name="Grallert A."/>
            <person name="Yates T."/>
            <person name="Smith D.L."/>
            <person name="Hagan I.M."/>
            <person name="Miller C.J."/>
        </authorList>
    </citation>
    <scope>REVISION OF GENE MODEL</scope>
    <scope>IDENTIFICATION BY MASS SPECTROMETRY</scope>
</reference>
<name>NOT2_SCHPO</name>
<dbReference type="EMBL" id="CU329672">
    <property type="protein sequence ID" value="CAB09770.2"/>
    <property type="molecule type" value="Genomic_DNA"/>
</dbReference>
<dbReference type="PIR" id="T41361">
    <property type="entry name" value="T41361"/>
</dbReference>
<dbReference type="RefSeq" id="NP_587823.2">
    <property type="nucleotide sequence ID" value="NM_001022816.2"/>
</dbReference>
<dbReference type="SMR" id="P87240"/>
<dbReference type="BioGRID" id="275359">
    <property type="interactions" value="96"/>
</dbReference>
<dbReference type="ComplexPortal" id="CPX-25774">
    <property type="entry name" value="CCR4-NOT mRNA deadenylase complex"/>
</dbReference>
<dbReference type="FunCoup" id="P87240">
    <property type="interactions" value="63"/>
</dbReference>
<dbReference type="STRING" id="284812.P87240"/>
<dbReference type="iPTMnet" id="P87240"/>
<dbReference type="PaxDb" id="4896-SPCC4G3.15c.1"/>
<dbReference type="EnsemblFungi" id="SPCC4G3.15c.1">
    <property type="protein sequence ID" value="SPCC4G3.15c.1:pep"/>
    <property type="gene ID" value="SPCC4G3.15c"/>
</dbReference>
<dbReference type="GeneID" id="2538778"/>
<dbReference type="KEGG" id="spo:2538778"/>
<dbReference type="PomBase" id="SPCC4G3.15c">
    <property type="gene designation" value="not2"/>
</dbReference>
<dbReference type="VEuPathDB" id="FungiDB:SPCC4G3.15c"/>
<dbReference type="eggNOG" id="KOG2151">
    <property type="taxonomic scope" value="Eukaryota"/>
</dbReference>
<dbReference type="HOGENOM" id="CLU_906605_0_0_1"/>
<dbReference type="InParanoid" id="P87240"/>
<dbReference type="OMA" id="FERGYYM"/>
<dbReference type="PRO" id="PR:P87240"/>
<dbReference type="Proteomes" id="UP000002485">
    <property type="component" value="Chromosome III"/>
</dbReference>
<dbReference type="GO" id="GO:0030014">
    <property type="term" value="C:CCR4-NOT complex"/>
    <property type="evidence" value="ECO:0000314"/>
    <property type="project" value="PomBase"/>
</dbReference>
<dbReference type="GO" id="GO:0030015">
    <property type="term" value="C:CCR4-NOT core complex"/>
    <property type="evidence" value="ECO:0000314"/>
    <property type="project" value="PomBase"/>
</dbReference>
<dbReference type="GO" id="GO:0005829">
    <property type="term" value="C:cytosol"/>
    <property type="evidence" value="ECO:0007005"/>
    <property type="project" value="PomBase"/>
</dbReference>
<dbReference type="GO" id="GO:0005634">
    <property type="term" value="C:nucleus"/>
    <property type="evidence" value="ECO:0007005"/>
    <property type="project" value="PomBase"/>
</dbReference>
<dbReference type="GO" id="GO:0000932">
    <property type="term" value="C:P-body"/>
    <property type="evidence" value="ECO:0000318"/>
    <property type="project" value="GO_Central"/>
</dbReference>
<dbReference type="GO" id="GO:0000289">
    <property type="term" value="P:nuclear-transcribed mRNA poly(A) tail shortening"/>
    <property type="evidence" value="ECO:0000314"/>
    <property type="project" value="PomBase"/>
</dbReference>
<dbReference type="GO" id="GO:0006355">
    <property type="term" value="P:regulation of DNA-templated transcription"/>
    <property type="evidence" value="ECO:0007669"/>
    <property type="project" value="InterPro"/>
</dbReference>
<dbReference type="Gene3D" id="2.30.30.1020">
    <property type="entry name" value="CCR4-NOT complex subunit 2/3/5, C-terminal domain"/>
    <property type="match status" value="1"/>
</dbReference>
<dbReference type="InterPro" id="IPR038635">
    <property type="entry name" value="CCR4-NOT_su2/3/5_C_sf"/>
</dbReference>
<dbReference type="InterPro" id="IPR040168">
    <property type="entry name" value="Not2/3/5"/>
</dbReference>
<dbReference type="InterPro" id="IPR007282">
    <property type="entry name" value="NOT2/3/5_C"/>
</dbReference>
<dbReference type="PANTHER" id="PTHR23326">
    <property type="entry name" value="CCR4 NOT-RELATED"/>
    <property type="match status" value="1"/>
</dbReference>
<dbReference type="Pfam" id="PF04153">
    <property type="entry name" value="NOT2_3_5_C"/>
    <property type="match status" value="1"/>
</dbReference>
<organism>
    <name type="scientific">Schizosaccharomyces pombe (strain 972 / ATCC 24843)</name>
    <name type="common">Fission yeast</name>
    <dbReference type="NCBI Taxonomy" id="284812"/>
    <lineage>
        <taxon>Eukaryota</taxon>
        <taxon>Fungi</taxon>
        <taxon>Dikarya</taxon>
        <taxon>Ascomycota</taxon>
        <taxon>Taphrinomycotina</taxon>
        <taxon>Schizosaccharomycetes</taxon>
        <taxon>Schizosaccharomycetales</taxon>
        <taxon>Schizosaccharomycetaceae</taxon>
        <taxon>Schizosaccharomyces</taxon>
    </lineage>
</organism>
<evidence type="ECO:0000250" key="1"/>
<evidence type="ECO:0000256" key="2">
    <source>
        <dbReference type="SAM" id="MobiDB-lite"/>
    </source>
</evidence>
<evidence type="ECO:0000269" key="3">
    <source>
    </source>
</evidence>
<evidence type="ECO:0000305" key="4"/>
<proteinExistence type="evidence at protein level"/>
<protein>
    <recommendedName>
        <fullName>General negative regulator of transcription subunit 2</fullName>
    </recommendedName>
</protein>
<comment type="function">
    <text evidence="1">Acts as a component of the CCR4-NOT core complex, which in the nucleus seems to be a general transcription factor, and in the cytoplasm the major mRNA deadenylase involved in mRNA turnover. NOT2 is required for the integrity of the complex. The NOT protein subcomplex negatively regulates the basal and activated transcription of many genes. Preferentially affects TC-type TATA element-dependent transcription. Could directly or indirectly inhibit component(s) of the general transcription machinery (By similarity).</text>
</comment>
<comment type="subcellular location">
    <subcellularLocation>
        <location evidence="3">Cytoplasm</location>
    </subcellularLocation>
    <subcellularLocation>
        <location evidence="3">Nucleus</location>
    </subcellularLocation>
</comment>
<comment type="similarity">
    <text evidence="4">Belongs to the CNOT2/3/5 family.</text>
</comment>
<sequence>MSLANRLSHLNITGGNDFKASIGPSVGRQNEATNPWSSTSHSLENSAATVVNELQTTKEQKTPEQSTTANPLFPGNDFSDFNNHKSKLLGVITGKSTPSSQAEKSDTTNSKTGSTEELTETPADENAKQYMLESLLPIIRMEDSEMSTLQLGCDLAALGFDLAPVEEDRLISTNLFSPWAELNTKKPVSQPMFKLPACYKNVNPPPAISKIFQFSDETLFYIFYTMPRDVMQEAAAQELTNRNWRFHKELRVWLTPVPGMKPLQRTPQFERGYYMFFDPIHWKRIKKDFLLMYAALEDRAQSAVHS</sequence>
<keyword id="KW-0010">Activator</keyword>
<keyword id="KW-0963">Cytoplasm</keyword>
<keyword id="KW-0539">Nucleus</keyword>
<keyword id="KW-1185">Reference proteome</keyword>
<keyword id="KW-0678">Repressor</keyword>
<keyword id="KW-0804">Transcription</keyword>
<keyword id="KW-0805">Transcription regulation</keyword>
<feature type="chain" id="PRO_0000356247" description="General negative regulator of transcription subunit 2">
    <location>
        <begin position="1"/>
        <end position="306"/>
    </location>
</feature>
<feature type="region of interest" description="Disordered" evidence="2">
    <location>
        <begin position="1"/>
        <end position="44"/>
    </location>
</feature>
<feature type="region of interest" description="Disordered" evidence="2">
    <location>
        <begin position="56"/>
        <end position="79"/>
    </location>
</feature>
<feature type="region of interest" description="Disordered" evidence="2">
    <location>
        <begin position="94"/>
        <end position="126"/>
    </location>
</feature>
<feature type="compositionally biased region" description="Polar residues" evidence="2">
    <location>
        <begin position="27"/>
        <end position="44"/>
    </location>
</feature>
<feature type="compositionally biased region" description="Polar residues" evidence="2">
    <location>
        <begin position="94"/>
        <end position="116"/>
    </location>
</feature>